<protein>
    <recommendedName>
        <fullName>Cilia- and flagella-associated protein 43</fullName>
    </recommendedName>
</protein>
<sequence length="1621" mass="185118">MENSGCALEVRWVQGINKKKVTFINDHTVCYPCGNFIVFHDTNTGKWSFLQCTTGSTGAFAVNTYSEVVAFSDQKLHPTIYVYTFPGFVKRAELKDGAQLDYSLIAFSHAAPYLASYSSIPDHVLTIWNWQESIPLCSKSDSQTTYTTLTFNPMNWHQLCLSSERSLTVWNIEICDNQYQLKAMPVKLPSEDGTTDIEEENLNSHTSNSVSYYGPLMPTSAVAGLVGDEAEIFIPKEQRKHSVQPSFHCWNATSDLYVGCAGGQILSISAETQKVTILAQKDQSADHLSRTTLLEGNIKTMAFHKEGLYVAGNDGVLHLFTIKGSEVKLEDSWNAQEPIDSISFSPSYKTLSITTSKGSLYLYNQRNPEETYKLLNVYSRDLLAADFLTFGNKYCLGTDISGHVQLWSVEDGKSVSSLNLNIQATAMACCPSSNYAAVGSSTGHIYFIDAVKTEAPRIVQRTRLYCVPVQHMHFDPRGNFLLTGAADRHIFILDARPSYSFQVLGYIVVCGEILTLSSLSSADTQQTKVMALVCPVDERKEEKGGTQLEMFSLPLQMLSSPSEYIDERGMFKDTMIQKISYDVDQPLFSAVMGYNSSSVFGYSSNETILLKYVIHKDISGSPVTALVAEKVVRGSQLGPGVLCLSPHLKWMAVSGRDGIVYVKDLLNMETMAQLQCHSYHNGGINSLAFSLDGQSIVTTGTCDGALVCLQWKSSGRSSSRLGLAGEYGKDLALSLQAAMKEEDQALSRMPVWTADADSLGVERKGKEYSQLSVDVTEQDSFPNTSANDVTWIKRKLEEAEKKETEKYAAEKEVIKTGIKKLRKTIQAMMRENESLPDIEKLDQQEFNLDTEEQERLYLDSEKEVARVRQEIELENLSKQYLREVIKQECWDSMAVKGRSVTAFHTGYEVMNYPMKERTPKELEKFARVLNLMKIEAVDLKVRKEIVETQPKIGPDDEEEVEEELMKCQDSSSLVGSLSDHYGGDTSCLYSQLILHSREEKINQIILLQDIIQNIKNAFNKDFDTVCRQKEQEITRVMERNNRIQEIMVELNLQEKLLEPTFTDNEKPERALTVDDSEVKVERYLTPEQKAKAEHLAKVEEAKRLAAQEDNAKQRALDDMMGGVLEVKKEDILRMEVPQPVFLARTEAEWTEEEKKQFKEYEKKCKDLSEEKEKYSKEELKINNLLFSLLIEEEINTRVAHLAYILDKKRKQKNQTAEIVKSFKSQVMAFRESYDNLVAEDKLLDRGFKKEFSDITSYQVDQLYKLYKRRPRVQRLRTQADSTAPFGERPGSAKAYKDSIALLMHAMDELDTPENVPEGVELPVWQRFCLARRSKIEYEQQVKIKALVLAEMQAFLDKRIEEDEKMRQDIENFMQELNVLRNEKMKFQLDLTVQFLLKQGQVELENTDLIPSFEDAILLHRSVIEDLNSTIKGLGEQKIASMVESKDFRKGIFQLEWEHRKIRMEMEDLEKKSRDISLLHVSKEFQVFLNEQNYDKRMSDQIQVLEETINAQEKQHGKNVKTYKKILKDLETHINKKIIANLELDKDLQELLVSFSERKHIYDVVGVEQSTEKAAKERYMEIIQRRKLVDLAKIQAQEIHELRSEVDRLRMKTFPALVQMEY</sequence>
<accession>A0A1L8GXY4</accession>
<gene>
    <name type="primary">cfap43</name>
</gene>
<comment type="function">
    <text evidence="3">Involved in the regulation of the beating frequency of motile cilia in multiciliated cells of the larval epidermis.</text>
</comment>
<comment type="subcellular location">
    <subcellularLocation>
        <location evidence="1">Cytoplasm</location>
        <location evidence="1">Cytoskeleton</location>
        <location evidence="1">Cilium axoneme</location>
    </subcellularLocation>
</comment>
<comment type="developmental stage">
    <text evidence="3">Expressed in the left-right organizer and floor plate at embryonic stage 19 (ES19) (PubMed:31884020). Expressed in multiciliated cells of the larval epidermis and nephrostomes at ES33 and in dorsal lining of the branchial chamber and stomach at ES45 (PubMed:31884020).</text>
</comment>
<comment type="disruption phenotype">
    <text evidence="3">Morpholino knockdown of the protein results in embryos with impaired function of motile cilia of the larval epidermis and majority of embryos develop edema around the heart.</text>
</comment>
<comment type="similarity">
    <text evidence="4">Belongs to the CFAP43 family.</text>
</comment>
<name>CFA43_XENLA</name>
<reference key="1">
    <citation type="journal article" date="2016" name="Nature">
        <title>Genome evolution in the allotetraploid frog Xenopus laevis.</title>
        <authorList>
            <person name="Session A.M."/>
            <person name="Uno Y."/>
            <person name="Kwon T."/>
            <person name="Chapman J.A."/>
            <person name="Toyoda A."/>
            <person name="Takahashi S."/>
            <person name="Fukui A."/>
            <person name="Hikosaka A."/>
            <person name="Suzuki A."/>
            <person name="Kondo M."/>
            <person name="van Heeringen S.J."/>
            <person name="Quigley I."/>
            <person name="Heinz S."/>
            <person name="Ogino H."/>
            <person name="Ochi H."/>
            <person name="Hellsten U."/>
            <person name="Lyons J.B."/>
            <person name="Simakov O."/>
            <person name="Putnam N."/>
            <person name="Stites J."/>
            <person name="Kuroki Y."/>
            <person name="Tanaka T."/>
            <person name="Michiue T."/>
            <person name="Watanabe M."/>
            <person name="Bogdanovic O."/>
            <person name="Lister R."/>
            <person name="Georgiou G."/>
            <person name="Paranjpe S.S."/>
            <person name="van Kruijsbergen I."/>
            <person name="Shu S."/>
            <person name="Carlson J."/>
            <person name="Kinoshita T."/>
            <person name="Ohta Y."/>
            <person name="Mawaribuchi S."/>
            <person name="Jenkins J."/>
            <person name="Grimwood J."/>
            <person name="Schmutz J."/>
            <person name="Mitros T."/>
            <person name="Mozaffari S.V."/>
            <person name="Suzuki Y."/>
            <person name="Haramoto Y."/>
            <person name="Yamamoto T.S."/>
            <person name="Takagi C."/>
            <person name="Heald R."/>
            <person name="Miller K."/>
            <person name="Haudenschild C."/>
            <person name="Kitzman J."/>
            <person name="Nakayama T."/>
            <person name="Izutsu Y."/>
            <person name="Robert J."/>
            <person name="Fortriede J."/>
            <person name="Burns K."/>
            <person name="Lotay V."/>
            <person name="Karimi K."/>
            <person name="Yasuoka Y."/>
            <person name="Dichmann D.S."/>
            <person name="Flajnik M.F."/>
            <person name="Houston D.W."/>
            <person name="Shendure J."/>
            <person name="DuPasquier L."/>
            <person name="Vize P.D."/>
            <person name="Zorn A.M."/>
            <person name="Ito M."/>
            <person name="Marcotte E.M."/>
            <person name="Wallingford J.B."/>
            <person name="Ito Y."/>
            <person name="Asashima M."/>
            <person name="Ueno N."/>
            <person name="Matsuda Y."/>
            <person name="Veenstra G.J."/>
            <person name="Fujiyama A."/>
            <person name="Harland R.M."/>
            <person name="Taira M."/>
            <person name="Rokhsar D.S."/>
        </authorList>
    </citation>
    <scope>NUCLEOTIDE SEQUENCE [LARGE SCALE GENOMIC DNA]</scope>
    <source>
        <strain>J</strain>
    </source>
</reference>
<reference key="2">
    <citation type="journal article" date="2020" name="Dev. Biol.">
        <title>CFAP43 modulates ciliary beating in mouse and Xenopus.</title>
        <authorList>
            <person name="Rachev E."/>
            <person name="Schuster-Gossler K."/>
            <person name="Fuhl F."/>
            <person name="Ott T."/>
            <person name="Tveriakhina L."/>
            <person name="Beckers A."/>
            <person name="Hegermann J."/>
            <person name="Boldt K."/>
            <person name="Mai M."/>
            <person name="Kremmer E."/>
            <person name="Ueffing M."/>
            <person name="Blum M."/>
            <person name="Gossler A."/>
        </authorList>
    </citation>
    <scope>FUNCTION</scope>
    <scope>DISRUPTION PHENOTYPE</scope>
    <scope>DEVELOPMENTAL STAGE</scope>
</reference>
<keyword id="KW-0966">Cell projection</keyword>
<keyword id="KW-0175">Coiled coil</keyword>
<keyword id="KW-0963">Cytoplasm</keyword>
<keyword id="KW-0206">Cytoskeleton</keyword>
<keyword id="KW-1185">Reference proteome</keyword>
<keyword id="KW-0677">Repeat</keyword>
<keyword id="KW-0853">WD repeat</keyword>
<evidence type="ECO:0000250" key="1">
    <source>
        <dbReference type="UniProtKB" id="E9Q7R9"/>
    </source>
</evidence>
<evidence type="ECO:0000255" key="2"/>
<evidence type="ECO:0000269" key="3">
    <source>
    </source>
</evidence>
<evidence type="ECO:0000305" key="4"/>
<organism>
    <name type="scientific">Xenopus laevis</name>
    <name type="common">African clawed frog</name>
    <dbReference type="NCBI Taxonomy" id="8355"/>
    <lineage>
        <taxon>Eukaryota</taxon>
        <taxon>Metazoa</taxon>
        <taxon>Chordata</taxon>
        <taxon>Craniata</taxon>
        <taxon>Vertebrata</taxon>
        <taxon>Euteleostomi</taxon>
        <taxon>Amphibia</taxon>
        <taxon>Batrachia</taxon>
        <taxon>Anura</taxon>
        <taxon>Pipoidea</taxon>
        <taxon>Pipidae</taxon>
        <taxon>Xenopodinae</taxon>
        <taxon>Xenopus</taxon>
        <taxon>Xenopus</taxon>
    </lineage>
</organism>
<dbReference type="EMBL" id="CM004470">
    <property type="protein sequence ID" value="OCT88656.1"/>
    <property type="molecule type" value="Genomic_DNA"/>
</dbReference>
<dbReference type="SMR" id="A0A1L8GXY4"/>
<dbReference type="STRING" id="8355.A0A1L8GXY4"/>
<dbReference type="PaxDb" id="8355-A0A1L8GXY4"/>
<dbReference type="AGR" id="Xenbase:XB-GENE-6486681"/>
<dbReference type="Xenbase" id="XB-GENE-6486681">
    <property type="gene designation" value="cfap43.L"/>
</dbReference>
<dbReference type="OMA" id="WNWESNV"/>
<dbReference type="Proteomes" id="UP000186698">
    <property type="component" value="Unplaced"/>
</dbReference>
<dbReference type="Proteomes" id="UP000694892">
    <property type="component" value="Chromosome 3L"/>
</dbReference>
<dbReference type="GO" id="GO:0005930">
    <property type="term" value="C:axoneme"/>
    <property type="evidence" value="ECO:0000318"/>
    <property type="project" value="GO_Central"/>
</dbReference>
<dbReference type="GO" id="GO:0005576">
    <property type="term" value="C:extracellular region"/>
    <property type="evidence" value="ECO:0007669"/>
    <property type="project" value="GOC"/>
</dbReference>
<dbReference type="GO" id="GO:0060271">
    <property type="term" value="P:cilium assembly"/>
    <property type="evidence" value="ECO:0000318"/>
    <property type="project" value="GO_Central"/>
</dbReference>
<dbReference type="GO" id="GO:0003351">
    <property type="term" value="P:epithelial cilium movement involved in extracellular fluid movement"/>
    <property type="evidence" value="ECO:0000315"/>
    <property type="project" value="MGI"/>
</dbReference>
<dbReference type="GO" id="GO:0003356">
    <property type="term" value="P:regulation of cilium beat frequency"/>
    <property type="evidence" value="ECO:0000315"/>
    <property type="project" value="UniProtKB"/>
</dbReference>
<dbReference type="GO" id="GO:0007288">
    <property type="term" value="P:sperm axoneme assembly"/>
    <property type="evidence" value="ECO:0000318"/>
    <property type="project" value="GO_Central"/>
</dbReference>
<dbReference type="Gene3D" id="2.130.10.10">
    <property type="entry name" value="YVTN repeat-like/Quinoprotein amine dehydrogenase"/>
    <property type="match status" value="4"/>
</dbReference>
<dbReference type="InterPro" id="IPR015943">
    <property type="entry name" value="WD40/YVTN_repeat-like_dom_sf"/>
</dbReference>
<dbReference type="InterPro" id="IPR036322">
    <property type="entry name" value="WD40_repeat_dom_sf"/>
</dbReference>
<dbReference type="InterPro" id="IPR001680">
    <property type="entry name" value="WD40_rpt"/>
</dbReference>
<dbReference type="PANTHER" id="PTHR14885:SF1">
    <property type="entry name" value="CILIA- AND FLAGELLA-ASSOCIATED PROTEIN 43"/>
    <property type="match status" value="1"/>
</dbReference>
<dbReference type="PANTHER" id="PTHR14885">
    <property type="entry name" value="CILIA- AND FLAGELLA-ASSOCIATED PROTEIN 43-RELATED"/>
    <property type="match status" value="1"/>
</dbReference>
<dbReference type="Pfam" id="PF00400">
    <property type="entry name" value="WD40"/>
    <property type="match status" value="1"/>
</dbReference>
<dbReference type="SMART" id="SM00320">
    <property type="entry name" value="WD40"/>
    <property type="match status" value="7"/>
</dbReference>
<dbReference type="SUPFAM" id="SSF50978">
    <property type="entry name" value="WD40 repeat-like"/>
    <property type="match status" value="2"/>
</dbReference>
<proteinExistence type="evidence at transcript level"/>
<feature type="chain" id="PRO_0000451142" description="Cilia- and flagella-associated protein 43">
    <location>
        <begin position="1"/>
        <end position="1621"/>
    </location>
</feature>
<feature type="repeat" description="WD 1" evidence="2">
    <location>
        <begin position="97"/>
        <end position="138"/>
    </location>
</feature>
<feature type="repeat" description="WD 2" evidence="2">
    <location>
        <begin position="141"/>
        <end position="180"/>
    </location>
</feature>
<feature type="repeat" description="WD 3" evidence="2">
    <location>
        <begin position="293"/>
        <end position="330"/>
    </location>
</feature>
<feature type="repeat" description="WD 4" evidence="2">
    <location>
        <begin position="334"/>
        <end position="373"/>
    </location>
</feature>
<feature type="repeat" description="WD 5" evidence="2">
    <location>
        <begin position="377"/>
        <end position="417"/>
    </location>
</feature>
<feature type="repeat" description="WD 6" evidence="2">
    <location>
        <begin position="464"/>
        <end position="503"/>
    </location>
</feature>
<feature type="repeat" description="WD 7" evidence="2">
    <location>
        <begin position="634"/>
        <end position="673"/>
    </location>
</feature>
<feature type="repeat" description="WD 8" evidence="2">
    <location>
        <begin position="679"/>
        <end position="721"/>
    </location>
</feature>
<feature type="coiled-coil region" evidence="2">
    <location>
        <begin position="792"/>
        <end position="812"/>
    </location>
</feature>
<feature type="coiled-coil region" evidence="2">
    <location>
        <begin position="850"/>
        <end position="870"/>
    </location>
</feature>
<feature type="coiled-coil region" evidence="2">
    <location>
        <begin position="1026"/>
        <end position="1046"/>
    </location>
</feature>
<feature type="coiled-coil region" evidence="2">
    <location>
        <begin position="1098"/>
        <end position="1118"/>
    </location>
</feature>
<feature type="coiled-coil region" evidence="2">
    <location>
        <begin position="1150"/>
        <end position="1177"/>
    </location>
</feature>
<feature type="coiled-coil region" evidence="2">
    <location>
        <begin position="1362"/>
        <end position="1389"/>
    </location>
</feature>
<feature type="coiled-coil region" evidence="2">
    <location>
        <begin position="1451"/>
        <end position="1514"/>
    </location>
</feature>
<feature type="coiled-coil region" evidence="2">
    <location>
        <begin position="1591"/>
        <end position="1611"/>
    </location>
</feature>